<accession>P80734</accession>
<accession>Q9Z368</accession>
<gene>
    <name type="primary">sodN</name>
</gene>
<organism>
    <name type="scientific">Streptomyces seoulensis</name>
    <dbReference type="NCBI Taxonomy" id="73044"/>
    <lineage>
        <taxon>Bacteria</taxon>
        <taxon>Bacillati</taxon>
        <taxon>Actinomycetota</taxon>
        <taxon>Actinomycetes</taxon>
        <taxon>Kitasatosporales</taxon>
        <taxon>Streptomycetaceae</taxon>
        <taxon>Streptomyces</taxon>
    </lineage>
</organism>
<dbReference type="EC" id="1.15.1.1"/>
<dbReference type="EMBL" id="AF047528">
    <property type="protein sequence ID" value="AAD17486.1"/>
    <property type="molecule type" value="Genomic_DNA"/>
</dbReference>
<dbReference type="EMBL" id="AF047461">
    <property type="protein sequence ID" value="AAD17482.1"/>
    <property type="molecule type" value="Genomic_DNA"/>
</dbReference>
<dbReference type="RefSeq" id="WP_031181160.1">
    <property type="nucleotide sequence ID" value="NZ_JNXP01000009.1"/>
</dbReference>
<dbReference type="PDB" id="1Q0D">
    <property type="method" value="X-ray"/>
    <property type="resolution" value="2.20 A"/>
    <property type="chains" value="A/B/C/D/E/F/G/H/I/J/K/L=15-131"/>
</dbReference>
<dbReference type="PDB" id="1Q0F">
    <property type="method" value="X-ray"/>
    <property type="resolution" value="2.20 A"/>
    <property type="chains" value="A/B/C/D/E/F/G/H/I/J/K/L=15-131"/>
</dbReference>
<dbReference type="PDB" id="1Q0G">
    <property type="method" value="X-ray"/>
    <property type="resolution" value="1.60 A"/>
    <property type="chains" value="A/B/C/D/E/F/G/H/I/J/K/L=15-131"/>
</dbReference>
<dbReference type="PDB" id="1Q0K">
    <property type="method" value="X-ray"/>
    <property type="resolution" value="2.10 A"/>
    <property type="chains" value="A/B/C/D/E/F/G/H/I/J/K/L=15-131"/>
</dbReference>
<dbReference type="PDB" id="1Q0M">
    <property type="method" value="X-ray"/>
    <property type="resolution" value="1.68 A"/>
    <property type="chains" value="A/B/C/D/E/F=15-131"/>
</dbReference>
<dbReference type="PDBsum" id="1Q0D"/>
<dbReference type="PDBsum" id="1Q0F"/>
<dbReference type="PDBsum" id="1Q0G"/>
<dbReference type="PDBsum" id="1Q0K"/>
<dbReference type="PDBsum" id="1Q0M"/>
<dbReference type="SMR" id="P80734"/>
<dbReference type="STRING" id="73044.GCA_000725795_02929"/>
<dbReference type="OrthoDB" id="9790847at2"/>
<dbReference type="EvolutionaryTrace" id="P80734"/>
<dbReference type="GO" id="GO:0005737">
    <property type="term" value="C:cytoplasm"/>
    <property type="evidence" value="ECO:0007669"/>
    <property type="project" value="UniProtKB-SubCell"/>
</dbReference>
<dbReference type="GO" id="GO:0016151">
    <property type="term" value="F:nickel cation binding"/>
    <property type="evidence" value="ECO:0007669"/>
    <property type="project" value="InterPro"/>
</dbReference>
<dbReference type="GO" id="GO:0004784">
    <property type="term" value="F:superoxide dismutase activity"/>
    <property type="evidence" value="ECO:0007669"/>
    <property type="project" value="UniProtKB-EC"/>
</dbReference>
<dbReference type="Gene3D" id="1.20.120.400">
    <property type="entry name" value="Nickel-containing superoxide dismutase"/>
    <property type="match status" value="1"/>
</dbReference>
<dbReference type="InterPro" id="IPR036502">
    <property type="entry name" value="NiSOD_sf"/>
</dbReference>
<dbReference type="InterPro" id="IPR014123">
    <property type="entry name" value="Superoxide_dismutase_Ni-type"/>
</dbReference>
<dbReference type="NCBIfam" id="TIGR02753">
    <property type="entry name" value="sodN"/>
    <property type="match status" value="1"/>
</dbReference>
<dbReference type="Pfam" id="PF09055">
    <property type="entry name" value="Sod_Ni"/>
    <property type="match status" value="1"/>
</dbReference>
<dbReference type="SUPFAM" id="SSF109770">
    <property type="entry name" value="Nickel-containing superoxide dismutase, NiSOD"/>
    <property type="match status" value="1"/>
</dbReference>
<keyword id="KW-0002">3D-structure</keyword>
<keyword id="KW-0049">Antioxidant</keyword>
<keyword id="KW-0963">Cytoplasm</keyword>
<keyword id="KW-0903">Direct protein sequencing</keyword>
<keyword id="KW-0479">Metal-binding</keyword>
<keyword id="KW-0533">Nickel</keyword>
<keyword id="KW-0560">Oxidoreductase</keyword>
<feature type="propeptide" id="PRO_0000032908" evidence="2">
    <location>
        <begin position="1"/>
        <end position="14"/>
    </location>
</feature>
<feature type="chain" id="PRO_0000032909" description="Superoxide dismutase [Ni]">
    <location>
        <begin position="15"/>
        <end position="131"/>
    </location>
</feature>
<feature type="binding site">
    <location>
        <position position="15"/>
    </location>
    <ligand>
        <name>Ni(2+)</name>
        <dbReference type="ChEBI" id="CHEBI:49786"/>
        <note>catalytic</note>
    </ligand>
</feature>
<feature type="binding site">
    <location>
        <position position="16"/>
    </location>
    <ligand>
        <name>Ni(2+)</name>
        <dbReference type="ChEBI" id="CHEBI:49786"/>
        <note>catalytic</note>
    </ligand>
</feature>
<feature type="binding site">
    <location>
        <position position="20"/>
    </location>
    <ligand>
        <name>Ni(2+)</name>
        <dbReference type="ChEBI" id="CHEBI:49786"/>
        <note>catalytic</note>
    </ligand>
</feature>
<feature type="mutagenesis site" description="Loss of activity." evidence="1">
    <original>H</original>
    <variation>A</variation>
    <variation>C</variation>
    <variation>D</variation>
    <variation>K</variation>
    <variation>N</variation>
    <variation>Q</variation>
    <variation>R</variation>
    <variation>W</variation>
    <variation>Y</variation>
    <location>
        <position position="15"/>
    </location>
</feature>
<feature type="mutagenesis site" description="Loss of activity." evidence="1">
    <original>Y</original>
    <variation>A</variation>
    <variation>K</variation>
    <variation>Q</variation>
    <location>
        <position position="23"/>
    </location>
</feature>
<feature type="mutagenesis site" description="Slight decrease of activity." evidence="1">
    <original>Y</original>
    <variation>F</variation>
    <variation>W</variation>
    <location>
        <position position="23"/>
    </location>
</feature>
<feature type="mutagenesis site" description="Loss of activity." evidence="1">
    <original>E</original>
    <variation>A</variation>
    <location>
        <position position="31"/>
    </location>
</feature>
<feature type="mutagenesis site" description="Loss of activity." evidence="1">
    <original>R</original>
    <variation>A</variation>
    <location>
        <position position="53"/>
    </location>
</feature>
<feature type="sequence conflict" description="In Ref. 2; AA sequence." evidence="3" ref="2">
    <original>C</original>
    <variation>G</variation>
    <location>
        <position position="16"/>
    </location>
</feature>
<feature type="sequence conflict" description="In Ref. 2; AA sequence." evidence="3" ref="2">
    <original>C</original>
    <variation>G</variation>
    <location>
        <position position="20"/>
    </location>
</feature>
<feature type="helix" evidence="4">
    <location>
        <begin position="26"/>
        <end position="44"/>
    </location>
</feature>
<feature type="helix" evidence="4">
    <location>
        <begin position="48"/>
        <end position="74"/>
    </location>
</feature>
<feature type="helix" evidence="4">
    <location>
        <begin position="79"/>
        <end position="84"/>
    </location>
</feature>
<feature type="helix" evidence="4">
    <location>
        <begin position="88"/>
        <end position="103"/>
    </location>
</feature>
<feature type="helix" evidence="4">
    <location>
        <begin position="108"/>
        <end position="130"/>
    </location>
</feature>
<reference key="1">
    <citation type="submission" date="1998-02" db="EMBL/GenBank/DDBJ databases">
        <title>Cloning and sequencing of sodN encoding Ni-containing superoxide dismutase from Streptomyces seoulensis.</title>
        <authorList>
            <person name="Kang S.-O."/>
            <person name="Yim Y.I."/>
            <person name="Youn H.-D."/>
        </authorList>
    </citation>
    <scope>NUCLEOTIDE SEQUENCE [GENOMIC DNA]</scope>
    <source>
        <strain>IMSNU-1</strain>
    </source>
</reference>
<reference key="2">
    <citation type="journal article" date="1996" name="Biochem. J.">
        <title>A novel nickel-containing superoxide dismutase from Streptomyces spp.</title>
        <authorList>
            <person name="Youn H.-D."/>
            <person name="Kim E.-J."/>
            <person name="Roe J.-H."/>
            <person name="Hah Y.C."/>
            <person name="Kang S.-O."/>
        </authorList>
    </citation>
    <scope>PROTEIN SEQUENCE OF 15-28</scope>
    <source>
        <strain>IMSNU-1</strain>
    </source>
</reference>
<reference key="3">
    <citation type="journal article" date="2004" name="Proc. Natl. Acad. Sci. U.S.A.">
        <title>Crystal structure of nickel-containing superoxide dismutase reveals another type of active site.</title>
        <authorList>
            <person name="Wuerges J."/>
            <person name="Lee J.W."/>
            <person name="Yim Y.I."/>
            <person name="Yim H.S."/>
            <person name="Kang S.O."/>
            <person name="Carugo K.D."/>
        </authorList>
    </citation>
    <scope>X-RAY CRYSTALLOGRAPHY (2.2 ANGSTROMS) OF 15-131 IN COMPLEX WITH NICKEL IONS</scope>
    <scope>MUTAGENESIS OF HIS-15; TYR-23; GLU-31 AND ARG-53</scope>
    <scope>SUBUNIT</scope>
</reference>
<sequence>MLSRLFAPKVKVSAHCDLPCGVYDPAQARIEAESVKAIQEKMAANDDLHFQIRATVIKEQRAELAKHHLDVLWSDYFKPPHFESYPELHTLVNEAVKALSAAKASTDPATGQKALDYIAQIDKIFWETKKA</sequence>
<protein>
    <recommendedName>
        <fullName>Superoxide dismutase [Ni]</fullName>
        <ecNumber>1.15.1.1</ecNumber>
    </recommendedName>
    <alternativeName>
        <fullName>NiSOD</fullName>
    </alternativeName>
    <alternativeName>
        <fullName>Nickel-containing superoxide dismutase</fullName>
    </alternativeName>
</protein>
<name>SODN_STRSO</name>
<comment type="catalytic activity">
    <reaction>
        <text>2 superoxide + 2 H(+) = H2O2 + O2</text>
        <dbReference type="Rhea" id="RHEA:20696"/>
        <dbReference type="ChEBI" id="CHEBI:15378"/>
        <dbReference type="ChEBI" id="CHEBI:15379"/>
        <dbReference type="ChEBI" id="CHEBI:16240"/>
        <dbReference type="ChEBI" id="CHEBI:18421"/>
        <dbReference type="EC" id="1.15.1.1"/>
    </reaction>
</comment>
<comment type="cofactor">
    <cofactor>
        <name>Ni(2+)</name>
        <dbReference type="ChEBI" id="CHEBI:49786"/>
    </cofactor>
</comment>
<comment type="subunit">
    <text evidence="1">Homohexamer. The hexameric protein has roughly the shape of a hollow sphere with an outer diameter of 72 Angstroms and a large inner cavity.</text>
</comment>
<comment type="subcellular location">
    <subcellularLocation>
        <location>Cytoplasm</location>
    </subcellularLocation>
</comment>
<comment type="similarity">
    <text evidence="3">Belongs to the nickel superoxide dismutase family.</text>
</comment>
<evidence type="ECO:0000269" key="1">
    <source>
    </source>
</evidence>
<evidence type="ECO:0000269" key="2">
    <source>
    </source>
</evidence>
<evidence type="ECO:0000305" key="3"/>
<evidence type="ECO:0007829" key="4">
    <source>
        <dbReference type="PDB" id="1Q0G"/>
    </source>
</evidence>
<proteinExistence type="evidence at protein level"/>